<gene>
    <name type="ordered locus">Bmul_0189</name>
    <name type="ordered locus">BMULJ_03075</name>
</gene>
<gene>
    <name type="ordered locus">Bmul_1166</name>
    <name type="ordered locus">BMULJ_02088</name>
</gene>
<gene>
    <name type="ordered locus">Bmul_1810</name>
    <name type="ordered locus">BMULJ_01430</name>
</gene>
<gene>
    <name type="ordered locus">Bmul_2280</name>
    <name type="ordered locus">BMULJ_00958</name>
</gene>
<gene>
    <name type="ordered locus">Bmul_2283</name>
    <name type="ordered locus">BMULJ_00955</name>
</gene>
<gene>
    <name type="ordered locus">Bmul_2614</name>
    <name type="ordered locus">BMULJ_00624</name>
</gene>
<gene>
    <name type="ordered locus">Bmul_5729</name>
    <name type="ordered locus">BMULJ_05791</name>
</gene>
<protein>
    <recommendedName>
        <fullName>Transposase for insertion sequence element IS406</fullName>
    </recommendedName>
</protein>
<keyword id="KW-0233">DNA recombination</keyword>
<keyword id="KW-0238">DNA-binding</keyword>
<keyword id="KW-1185">Reference proteome</keyword>
<keyword id="KW-0814">Transposable element</keyword>
<keyword id="KW-0815">Transposition</keyword>
<comment type="function">
    <text>Required for the transposition of the insertion element.</text>
</comment>
<comment type="similarity">
    <text evidence="1">Belongs to the transposase mutator family.</text>
</comment>
<dbReference type="EMBL" id="M82979">
    <property type="protein sequence ID" value="AAA25037.1"/>
    <property type="molecule type" value="Genomic_DNA"/>
</dbReference>
<dbReference type="EMBL" id="CP000868">
    <property type="protein sequence ID" value="ABX13884.1"/>
    <property type="molecule type" value="Genomic_DNA"/>
</dbReference>
<dbReference type="EMBL" id="CP000868">
    <property type="protein sequence ID" value="ABX14856.1"/>
    <property type="molecule type" value="Genomic_DNA"/>
</dbReference>
<dbReference type="EMBL" id="CP000868">
    <property type="protein sequence ID" value="ABX15498.1"/>
    <property type="molecule type" value="Genomic_DNA"/>
</dbReference>
<dbReference type="EMBL" id="CP000868">
    <property type="protein sequence ID" value="ABX15965.1"/>
    <property type="molecule type" value="Genomic_DNA"/>
</dbReference>
<dbReference type="EMBL" id="CP000868">
    <property type="protein sequence ID" value="ABX15968.1"/>
    <property type="molecule type" value="Genomic_DNA"/>
</dbReference>
<dbReference type="EMBL" id="CP000868">
    <property type="protein sequence ID" value="ABX16298.1"/>
    <property type="molecule type" value="Genomic_DNA"/>
</dbReference>
<dbReference type="EMBL" id="CP000870">
    <property type="protein sequence ID" value="ABX19393.1"/>
    <property type="molecule type" value="Genomic_DNA"/>
</dbReference>
<dbReference type="EMBL" id="AP009385">
    <property type="protein sequence ID" value="BAG42588.1"/>
    <property type="molecule type" value="Genomic_DNA"/>
</dbReference>
<dbReference type="EMBL" id="AP009385">
    <property type="protein sequence ID" value="BAG42904.1"/>
    <property type="molecule type" value="Genomic_DNA"/>
</dbReference>
<dbReference type="EMBL" id="AP009385">
    <property type="protein sequence ID" value="BAG42906.1"/>
    <property type="molecule type" value="Genomic_DNA"/>
</dbReference>
<dbReference type="EMBL" id="AP009385">
    <property type="protein sequence ID" value="BAG43365.1"/>
    <property type="molecule type" value="Genomic_DNA"/>
</dbReference>
<dbReference type="EMBL" id="AP009385">
    <property type="protein sequence ID" value="BAG43996.1"/>
    <property type="molecule type" value="Genomic_DNA"/>
</dbReference>
<dbReference type="EMBL" id="AP009385">
    <property type="protein sequence ID" value="BAG44950.1"/>
    <property type="molecule type" value="Genomic_DNA"/>
</dbReference>
<dbReference type="EMBL" id="AP009387">
    <property type="protein sequence ID" value="BAG47600.1"/>
    <property type="molecule type" value="Genomic_DNA"/>
</dbReference>
<dbReference type="PIR" id="S28798">
    <property type="entry name" value="S28798"/>
</dbReference>
<dbReference type="RefSeq" id="WP_012212527.1">
    <property type="nucleotide sequence ID" value="NC_010804.1"/>
</dbReference>
<dbReference type="SMR" id="P24575"/>
<dbReference type="STRING" id="395019.BMULJ_00624"/>
<dbReference type="KEGG" id="bmj:BMULJ_00624"/>
<dbReference type="KEGG" id="bmj:BMULJ_00955"/>
<dbReference type="KEGG" id="bmj:BMULJ_00958"/>
<dbReference type="KEGG" id="bmj:BMULJ_01430"/>
<dbReference type="KEGG" id="bmj:BMULJ_02088"/>
<dbReference type="KEGG" id="bmj:BMULJ_03075"/>
<dbReference type="KEGG" id="bmj:BMULJ_05791"/>
<dbReference type="KEGG" id="bmu:Bmul_0189"/>
<dbReference type="KEGG" id="bmu:Bmul_1166"/>
<dbReference type="KEGG" id="bmu:Bmul_1810"/>
<dbReference type="KEGG" id="bmu:Bmul_2280"/>
<dbReference type="KEGG" id="bmu:Bmul_2283"/>
<dbReference type="KEGG" id="bmu:Bmul_2614"/>
<dbReference type="KEGG" id="bmu:Bmul_5729"/>
<dbReference type="eggNOG" id="COG3328">
    <property type="taxonomic scope" value="Bacteria"/>
</dbReference>
<dbReference type="HOGENOM" id="CLU_036805_8_0_4"/>
<dbReference type="Proteomes" id="UP000008815">
    <property type="component" value="Chromosome 1"/>
</dbReference>
<dbReference type="Proteomes" id="UP000008815">
    <property type="component" value="Chromosome 3"/>
</dbReference>
<dbReference type="GO" id="GO:0003677">
    <property type="term" value="F:DNA binding"/>
    <property type="evidence" value="ECO:0007669"/>
    <property type="project" value="UniProtKB-KW"/>
</dbReference>
<dbReference type="GO" id="GO:0004803">
    <property type="term" value="F:transposase activity"/>
    <property type="evidence" value="ECO:0007669"/>
    <property type="project" value="InterPro"/>
</dbReference>
<dbReference type="GO" id="GO:0006313">
    <property type="term" value="P:DNA transposition"/>
    <property type="evidence" value="ECO:0007669"/>
    <property type="project" value="InterPro"/>
</dbReference>
<dbReference type="InterPro" id="IPR001207">
    <property type="entry name" value="Transposase_mutator"/>
</dbReference>
<dbReference type="NCBIfam" id="NF033543">
    <property type="entry name" value="transpos_IS256"/>
    <property type="match status" value="1"/>
</dbReference>
<dbReference type="PANTHER" id="PTHR33217">
    <property type="entry name" value="TRANSPOSASE FOR INSERTION SEQUENCE ELEMENT IS1081"/>
    <property type="match status" value="1"/>
</dbReference>
<dbReference type="PANTHER" id="PTHR33217:SF7">
    <property type="entry name" value="TRANSPOSASE FOR INSERTION SEQUENCE ELEMENT IS1081"/>
    <property type="match status" value="1"/>
</dbReference>
<dbReference type="Pfam" id="PF00872">
    <property type="entry name" value="Transposase_mut"/>
    <property type="match status" value="1"/>
</dbReference>
<dbReference type="PROSITE" id="PS01007">
    <property type="entry name" value="TRANSPOSASE_MUTATOR"/>
    <property type="match status" value="1"/>
</dbReference>
<accession>P24575</accession>
<accession>A9ABJ0</accession>
<evidence type="ECO:0000305" key="1"/>
<reference key="1">
    <citation type="journal article" date="1991" name="Gene">
        <title>IS406 and IS407, two gene-activating insertion sequences for Pseudomonas cepacia.</title>
        <authorList>
            <person name="Wood M.S."/>
            <person name="Byrne A."/>
            <person name="Lessie T.G."/>
        </authorList>
    </citation>
    <scope>NUCLEOTIDE SEQUENCE [GENOMIC DNA]</scope>
</reference>
<reference key="2">
    <citation type="submission" date="2007-10" db="EMBL/GenBank/DDBJ databases">
        <title>Complete sequence of chromosome 1 of Burkholderia multivorans ATCC 17616.</title>
        <authorList>
            <person name="Copeland A."/>
            <person name="Lucas S."/>
            <person name="Lapidus A."/>
            <person name="Barry K."/>
            <person name="Glavina del Rio T."/>
            <person name="Dalin E."/>
            <person name="Tice H."/>
            <person name="Pitluck S."/>
            <person name="Chain P."/>
            <person name="Malfatti S."/>
            <person name="Shin M."/>
            <person name="Vergez L."/>
            <person name="Schmutz J."/>
            <person name="Larimer F."/>
            <person name="Land M."/>
            <person name="Hauser L."/>
            <person name="Kyrpides N."/>
            <person name="Kim E."/>
            <person name="Tiedje J."/>
            <person name="Richardson P."/>
        </authorList>
    </citation>
    <scope>NUCLEOTIDE SEQUENCE [LARGE SCALE GENOMIC DNA]</scope>
    <source>
        <strain>ATCC 17616 / 249</strain>
    </source>
</reference>
<reference key="3">
    <citation type="submission" date="2007-10" db="EMBL/GenBank/DDBJ databases">
        <title>Complete sequence of chromosome 3 of Burkholderia multivorans ATCC 17616.</title>
        <authorList>
            <person name="Copeland A."/>
            <person name="Lucas S."/>
            <person name="Lapidus A."/>
            <person name="Barry K."/>
            <person name="Glavina del Rio T."/>
            <person name="Dalin E."/>
            <person name="Tice H."/>
            <person name="Pitluck S."/>
            <person name="Chain P."/>
            <person name="Malfatti S."/>
            <person name="Shin M."/>
            <person name="Vergez L."/>
            <person name="Schmutz J."/>
            <person name="Larimer F."/>
            <person name="Land M."/>
            <person name="Hauser L."/>
            <person name="Kyrpides N."/>
            <person name="Kim E."/>
            <person name="Tiedje J."/>
            <person name="Richardson P."/>
        </authorList>
    </citation>
    <scope>NUCLEOTIDE SEQUENCE [LARGE SCALE GENOMIC DNA]</scope>
    <source>
        <strain>ATCC 17616 / 249</strain>
    </source>
</reference>
<reference key="4">
    <citation type="submission" date="2007-04" db="EMBL/GenBank/DDBJ databases">
        <title>Complete genome sequence of Burkholderia multivorans ATCC 17616.</title>
        <authorList>
            <person name="Ohtsubo Y."/>
            <person name="Yamashita A."/>
            <person name="Kurokawa K."/>
            <person name="Takami H."/>
            <person name="Yuhara S."/>
            <person name="Nishiyama E."/>
            <person name="Endo R."/>
            <person name="Miyazaki R."/>
            <person name="Ono A."/>
            <person name="Yano K."/>
            <person name="Ito M."/>
            <person name="Sota M."/>
            <person name="Yuji N."/>
            <person name="Hattori M."/>
            <person name="Tsuda M."/>
        </authorList>
    </citation>
    <scope>NUCLEOTIDE SEQUENCE [LARGE SCALE GENOMIC DNA]</scope>
    <source>
        <strain>ATCC 17616 / 249</strain>
    </source>
</reference>
<organism>
    <name type="scientific">Burkholderia multivorans (strain ATCC 17616 / 249)</name>
    <dbReference type="NCBI Taxonomy" id="395019"/>
    <lineage>
        <taxon>Bacteria</taxon>
        <taxon>Pseudomonadati</taxon>
        <taxon>Pseudomonadota</taxon>
        <taxon>Betaproteobacteria</taxon>
        <taxon>Burkholderiales</taxon>
        <taxon>Burkholderiaceae</taxon>
        <taxon>Burkholderia</taxon>
        <taxon>Burkholderia cepacia complex</taxon>
    </lineage>
</organism>
<sequence length="388" mass="43470">MAMRVETNPLEAAYAALLENGLDGAGEALRILVNEAAKIERSAFLGARPYERTETRRDYANGFKPKTVLTRHGELTFQVPQVRSSDFYPSALEKGTRTDQAVNLALAEMYVQGVSTRRVIDVLQRLLGPEISLSSAQVSRAAAKLDEGLRAWRERPLGETPYLFLDARYEKVRLEGRIVDCAVLIAVGIEASGKRRVLGCEVATSEAEINWRRFLESLLARGLKGVTLIIADDHAGLKAARRAVLPSVPWQRCQFHLQQNAGALTTRQEARKTVAAQMRAIFNAPDRTEAERLLKAALTLWCKEHPKLAEWAETAIPESLTVFDFPAAHRIRLRTTNGLERINRELRRRTRVASIFPNPDSCLRLVSALLAELDDEWMTGKVYLNFNP</sequence>
<name>TRA6_BURM1</name>
<feature type="chain" id="PRO_0000211345" description="Transposase for insertion sequence element IS406">
    <location>
        <begin position="1"/>
        <end position="388"/>
    </location>
</feature>
<proteinExistence type="inferred from homology"/>